<name>A413_LOXHI</name>
<proteinExistence type="evidence at transcript level"/>
<sequence length="278" mass="31160">WIMGHMVNEIYQIDEFVDLGANSIETDITFDDNAMAEYSFHGVPCDCRRYCHKWEYINTFLDGLRRATTPGDSKFRKELALVVFDLKTGDLSSSTANKGGKLFGQKLLQHYWKGGNNGGRAYIILSIPDLDHYAFISGFKEALKTAGHEELLAKVGYDFSGNDDLGSTRTALNKAGVKDREHVWQSGGITNCVSTLFRGLDRVKKAVSNRDSSNGYINKVYHWTVDKYGSVRDALDAGVDGVMTNDPDVIVNVLNESKYKGKLRLATYDDNPWETFKP</sequence>
<organism>
    <name type="scientific">Loxosceles hirsuta</name>
    <name type="common">Recluse spider</name>
    <dbReference type="NCBI Taxonomy" id="571525"/>
    <lineage>
        <taxon>Eukaryota</taxon>
        <taxon>Metazoa</taxon>
        <taxon>Ecdysozoa</taxon>
        <taxon>Arthropoda</taxon>
        <taxon>Chelicerata</taxon>
        <taxon>Arachnida</taxon>
        <taxon>Araneae</taxon>
        <taxon>Araneomorphae</taxon>
        <taxon>Haplogynae</taxon>
        <taxon>Scytodoidea</taxon>
        <taxon>Sicariidae</taxon>
        <taxon>Loxosceles</taxon>
    </lineage>
</organism>
<protein>
    <recommendedName>
        <fullName evidence="6">Dermonecrotic toxin LhSicTox-alphaIV1iii</fullName>
        <ecNumber evidence="4">4.6.1.-</ecNumber>
    </recommendedName>
    <alternativeName>
        <fullName>Phospholipase D</fullName>
        <shortName>PLD</shortName>
    </alternativeName>
    <alternativeName>
        <fullName>Sphingomyelin phosphodiesterase D</fullName>
        <shortName>SMD</shortName>
        <shortName>SMase D</shortName>
        <shortName>Sphingomyelinase D</shortName>
    </alternativeName>
</protein>
<accession>C0JB16</accession>
<dbReference type="EC" id="4.6.1.-" evidence="4"/>
<dbReference type="EMBL" id="FJ171451">
    <property type="protein sequence ID" value="ACN48947.1"/>
    <property type="molecule type" value="mRNA"/>
</dbReference>
<dbReference type="SMR" id="C0JB16"/>
<dbReference type="GO" id="GO:0005576">
    <property type="term" value="C:extracellular region"/>
    <property type="evidence" value="ECO:0007669"/>
    <property type="project" value="UniProtKB-SubCell"/>
</dbReference>
<dbReference type="GO" id="GO:0016829">
    <property type="term" value="F:lyase activity"/>
    <property type="evidence" value="ECO:0007669"/>
    <property type="project" value="UniProtKB-KW"/>
</dbReference>
<dbReference type="GO" id="GO:0046872">
    <property type="term" value="F:metal ion binding"/>
    <property type="evidence" value="ECO:0007669"/>
    <property type="project" value="UniProtKB-KW"/>
</dbReference>
<dbReference type="GO" id="GO:0008081">
    <property type="term" value="F:phosphoric diester hydrolase activity"/>
    <property type="evidence" value="ECO:0007669"/>
    <property type="project" value="InterPro"/>
</dbReference>
<dbReference type="GO" id="GO:0090729">
    <property type="term" value="F:toxin activity"/>
    <property type="evidence" value="ECO:0007669"/>
    <property type="project" value="UniProtKB-KW"/>
</dbReference>
<dbReference type="GO" id="GO:0031640">
    <property type="term" value="P:killing of cells of another organism"/>
    <property type="evidence" value="ECO:0007669"/>
    <property type="project" value="UniProtKB-KW"/>
</dbReference>
<dbReference type="GO" id="GO:0016042">
    <property type="term" value="P:lipid catabolic process"/>
    <property type="evidence" value="ECO:0007669"/>
    <property type="project" value="UniProtKB-KW"/>
</dbReference>
<dbReference type="CDD" id="cd08576">
    <property type="entry name" value="GDPD_like_SMaseD_PLD"/>
    <property type="match status" value="1"/>
</dbReference>
<dbReference type="Gene3D" id="3.20.20.190">
    <property type="entry name" value="Phosphatidylinositol (PI) phosphodiesterase"/>
    <property type="match status" value="1"/>
</dbReference>
<dbReference type="InterPro" id="IPR017946">
    <property type="entry name" value="PLC-like_Pdiesterase_TIM-brl"/>
</dbReference>
<dbReference type="Pfam" id="PF13653">
    <property type="entry name" value="GDPD_2"/>
    <property type="match status" value="1"/>
</dbReference>
<dbReference type="SUPFAM" id="SSF51695">
    <property type="entry name" value="PLC-like phosphodiesterases"/>
    <property type="match status" value="1"/>
</dbReference>
<feature type="chain" id="PRO_0000392836" description="Dermonecrotic toxin LhSicTox-alphaIV1iii">
    <location>
        <begin position="1" status="less than"/>
        <end position="278"/>
    </location>
</feature>
<feature type="active site" evidence="5">
    <location>
        <position position="5"/>
    </location>
</feature>
<feature type="active site" description="Nucleophile" evidence="5">
    <location>
        <position position="41"/>
    </location>
</feature>
<feature type="binding site" evidence="5">
    <location>
        <position position="25"/>
    </location>
    <ligand>
        <name>Mg(2+)</name>
        <dbReference type="ChEBI" id="CHEBI:18420"/>
    </ligand>
</feature>
<feature type="binding site" evidence="5">
    <location>
        <position position="27"/>
    </location>
    <ligand>
        <name>Mg(2+)</name>
        <dbReference type="ChEBI" id="CHEBI:18420"/>
    </ligand>
</feature>
<feature type="binding site" evidence="5">
    <location>
        <position position="85"/>
    </location>
    <ligand>
        <name>Mg(2+)</name>
        <dbReference type="ChEBI" id="CHEBI:18420"/>
    </ligand>
</feature>
<feature type="disulfide bond" evidence="3">
    <location>
        <begin position="45"/>
        <end position="51"/>
    </location>
</feature>
<feature type="disulfide bond" evidence="3">
    <location>
        <begin position="47"/>
        <end position="192"/>
    </location>
</feature>
<feature type="non-terminal residue">
    <location>
        <position position="1"/>
    </location>
</feature>
<keyword id="KW-0204">Cytolysis</keyword>
<keyword id="KW-1061">Dermonecrotic toxin</keyword>
<keyword id="KW-1015">Disulfide bond</keyword>
<keyword id="KW-0354">Hemolysis</keyword>
<keyword id="KW-0442">Lipid degradation</keyword>
<keyword id="KW-0443">Lipid metabolism</keyword>
<keyword id="KW-0456">Lyase</keyword>
<keyword id="KW-0460">Magnesium</keyword>
<keyword id="KW-0479">Metal-binding</keyword>
<keyword id="KW-0964">Secreted</keyword>
<keyword id="KW-0800">Toxin</keyword>
<evidence type="ECO:0000250" key="1">
    <source>
        <dbReference type="UniProtKB" id="A0A0D4WTV1"/>
    </source>
</evidence>
<evidence type="ECO:0000250" key="2">
    <source>
        <dbReference type="UniProtKB" id="A0A0D4WV12"/>
    </source>
</evidence>
<evidence type="ECO:0000250" key="3">
    <source>
        <dbReference type="UniProtKB" id="P0CE80"/>
    </source>
</evidence>
<evidence type="ECO:0000250" key="4">
    <source>
        <dbReference type="UniProtKB" id="Q4ZFU2"/>
    </source>
</evidence>
<evidence type="ECO:0000250" key="5">
    <source>
        <dbReference type="UniProtKB" id="Q8I914"/>
    </source>
</evidence>
<evidence type="ECO:0000303" key="6">
    <source>
    </source>
</evidence>
<evidence type="ECO:0000305" key="7"/>
<evidence type="ECO:0000305" key="8">
    <source>
    </source>
</evidence>
<reference key="1">
    <citation type="journal article" date="2009" name="Mol. Biol. Evol.">
        <title>Molecular evolution, functional variation, and proposed nomenclature of the gene family that includes sphingomyelinase D in sicariid spider venoms.</title>
        <authorList>
            <person name="Binford G.J."/>
            <person name="Bodner M.R."/>
            <person name="Cordes M.H."/>
            <person name="Baldwin K.L."/>
            <person name="Rynerson M.R."/>
            <person name="Burns S.N."/>
            <person name="Zobel-Thropp P.A."/>
        </authorList>
    </citation>
    <scope>NUCLEOTIDE SEQUENCE [MRNA]</scope>
    <scope>NOMENCLATURE</scope>
    <source>
        <tissue>Venom gland</tissue>
    </source>
</reference>
<comment type="function">
    <text evidence="1 3">Dermonecrotic toxins cleave the phosphodiester linkage between the phosphate and headgroup of certain phospholipids (sphingolipid and lysolipid substrates), forming an alcohol (often choline) and a cyclic phosphate (By similarity). This toxin acts on sphingomyelin (SM) (By similarity). It may also act on ceramide phosphoethanolamine (CPE), lysophosphatidylcholine (LPC) and lysophosphatidylethanolamine (LPE), but not on lysophosphatidylserine (LPS), and lysophosphatidylglycerol (LPG) (By similarity). It acts by transphosphatidylation, releasing exclusively cyclic phosphate products as second products (By similarity). Induces dermonecrosis, hemolysis, increased vascular permeability, edema, inflammatory response, and platelet aggregation (By similarity).</text>
</comment>
<comment type="catalytic activity">
    <reaction evidence="1">
        <text>an N-(acyl)-sphingosylphosphocholine = an N-(acyl)-sphingosyl-1,3-cyclic phosphate + choline</text>
        <dbReference type="Rhea" id="RHEA:60652"/>
        <dbReference type="ChEBI" id="CHEBI:15354"/>
        <dbReference type="ChEBI" id="CHEBI:64583"/>
        <dbReference type="ChEBI" id="CHEBI:143892"/>
    </reaction>
</comment>
<comment type="catalytic activity">
    <reaction evidence="1">
        <text>an N-(acyl)-sphingosylphosphoethanolamine = an N-(acyl)-sphingosyl-1,3-cyclic phosphate + ethanolamine</text>
        <dbReference type="Rhea" id="RHEA:60648"/>
        <dbReference type="ChEBI" id="CHEBI:57603"/>
        <dbReference type="ChEBI" id="CHEBI:143891"/>
        <dbReference type="ChEBI" id="CHEBI:143892"/>
    </reaction>
</comment>
<comment type="catalytic activity">
    <reaction evidence="1">
        <text>a 1-acyl-sn-glycero-3-phosphocholine = a 1-acyl-sn-glycero-2,3-cyclic phosphate + choline</text>
        <dbReference type="Rhea" id="RHEA:60700"/>
        <dbReference type="ChEBI" id="CHEBI:15354"/>
        <dbReference type="ChEBI" id="CHEBI:58168"/>
        <dbReference type="ChEBI" id="CHEBI:143947"/>
    </reaction>
</comment>
<comment type="catalytic activity">
    <reaction evidence="1">
        <text>a 1-acyl-sn-glycero-3-phosphoethanolamine = a 1-acyl-sn-glycero-2,3-cyclic phosphate + ethanolamine</text>
        <dbReference type="Rhea" id="RHEA:60704"/>
        <dbReference type="ChEBI" id="CHEBI:57603"/>
        <dbReference type="ChEBI" id="CHEBI:64381"/>
        <dbReference type="ChEBI" id="CHEBI:143947"/>
    </reaction>
</comment>
<comment type="cofactor">
    <cofactor evidence="5">
        <name>Mg(2+)</name>
        <dbReference type="ChEBI" id="CHEBI:18420"/>
    </cofactor>
    <text evidence="5">Binds 1 Mg(2+) ion per subunit.</text>
</comment>
<comment type="subcellular location">
    <subcellularLocation>
        <location evidence="8">Secreted</location>
    </subcellularLocation>
</comment>
<comment type="tissue specificity">
    <text evidence="8">Expressed by the venom gland.</text>
</comment>
<comment type="similarity">
    <text evidence="7">Belongs to the arthropod phospholipase D family. Class II subfamily.</text>
</comment>
<comment type="caution">
    <text evidence="1 2 4">The most common activity assay for dermonecrotic toxins detects enzymatic activity by monitoring choline release from substrate. Liberation of choline from sphingomyelin (SM) or lysophosphatidylcholine (LPC) is commonly assumed to result from substrate hydrolysis, giving either ceramide-1-phosphate (C1P) or lysophosphatidic acid (LPA), respectively, as a second product. However, two studies from Lajoie and colleagues (2013 and 2015) report the observation of exclusive formation of cyclic phosphate products as second products, resulting from intramolecular transphosphatidylation. Cyclic phosphates have vastly different biological properties from their monoester counterparts, and they may be relevant to the pathology of brown spider envenomation.</text>
</comment>